<accession>Q9US45</accession>
<evidence type="ECO:0000250" key="1"/>
<evidence type="ECO:0000256" key="2">
    <source>
        <dbReference type="SAM" id="MobiDB-lite"/>
    </source>
</evidence>
<evidence type="ECO:0000269" key="3">
    <source>
    </source>
</evidence>
<evidence type="ECO:0000269" key="4">
    <source>
    </source>
</evidence>
<evidence type="ECO:0000305" key="5"/>
<evidence type="ECO:0007829" key="6">
    <source>
        <dbReference type="PDB" id="4H61"/>
    </source>
</evidence>
<evidence type="ECO:0007829" key="7">
    <source>
        <dbReference type="PDB" id="4H63"/>
    </source>
</evidence>
<evidence type="ECO:0007829" key="8">
    <source>
        <dbReference type="PDB" id="5N9J"/>
    </source>
</evidence>
<dbReference type="EMBL" id="CU329670">
    <property type="protein sequence ID" value="CAB65615.1"/>
    <property type="molecule type" value="Genomic_DNA"/>
</dbReference>
<dbReference type="RefSeq" id="NP_593503.1">
    <property type="nucleotide sequence ID" value="NM_001018937.2"/>
</dbReference>
<dbReference type="PDB" id="4H61">
    <property type="method" value="X-ray"/>
    <property type="resolution" value="2.70 A"/>
    <property type="chains" value="A/B=10-180"/>
</dbReference>
<dbReference type="PDB" id="4H63">
    <property type="method" value="X-ray"/>
    <property type="resolution" value="3.40 A"/>
    <property type="chains" value="F=1-180"/>
</dbReference>
<dbReference type="PDB" id="5N9J">
    <property type="method" value="X-ray"/>
    <property type="resolution" value="3.40 A"/>
    <property type="chains" value="S=1-216"/>
</dbReference>
<dbReference type="PDB" id="5U0P">
    <property type="method" value="EM"/>
    <property type="resolution" value="4.40 A"/>
    <property type="chains" value="F=1-216"/>
</dbReference>
<dbReference type="PDB" id="5U0S">
    <property type="method" value="EM"/>
    <property type="resolution" value="7.80 A"/>
    <property type="chains" value="F=1-216"/>
</dbReference>
<dbReference type="PDBsum" id="4H61"/>
<dbReference type="PDBsum" id="4H63"/>
<dbReference type="PDBsum" id="5N9J"/>
<dbReference type="PDBsum" id="5U0P"/>
<dbReference type="PDBsum" id="5U0S"/>
<dbReference type="EMDB" id="EMD-8479"/>
<dbReference type="EMDB" id="EMD-8480"/>
<dbReference type="SMR" id="Q9US45"/>
<dbReference type="BioGRID" id="279691">
    <property type="interactions" value="109"/>
</dbReference>
<dbReference type="DIP" id="DIP-38748N"/>
<dbReference type="FunCoup" id="Q9US45">
    <property type="interactions" value="712"/>
</dbReference>
<dbReference type="IntAct" id="Q9US45">
    <property type="interactions" value="7"/>
</dbReference>
<dbReference type="STRING" id="284812.Q9US45"/>
<dbReference type="iPTMnet" id="Q9US45"/>
<dbReference type="PaxDb" id="4896-SPAC1002.15c.1"/>
<dbReference type="EnsemblFungi" id="SPAC1002.15c.1">
    <property type="protein sequence ID" value="SPAC1002.15c.1:pep"/>
    <property type="gene ID" value="SPAC1002.15c"/>
</dbReference>
<dbReference type="GeneID" id="2543263"/>
<dbReference type="KEGG" id="spo:2543263"/>
<dbReference type="PomBase" id="SPAC1002.15c">
    <property type="gene designation" value="med6"/>
</dbReference>
<dbReference type="VEuPathDB" id="FungiDB:SPAC1002.15c"/>
<dbReference type="eggNOG" id="KOG3169">
    <property type="taxonomic scope" value="Eukaryota"/>
</dbReference>
<dbReference type="HOGENOM" id="CLU_077754_6_0_1"/>
<dbReference type="InParanoid" id="Q9US45"/>
<dbReference type="OMA" id="ERPPFLW"/>
<dbReference type="PhylomeDB" id="Q9US45"/>
<dbReference type="EvolutionaryTrace" id="Q9US45"/>
<dbReference type="PRO" id="PR:Q9US45"/>
<dbReference type="Proteomes" id="UP000002485">
    <property type="component" value="Chromosome I"/>
</dbReference>
<dbReference type="GO" id="GO:0070847">
    <property type="term" value="C:core mediator complex"/>
    <property type="evidence" value="ECO:0000318"/>
    <property type="project" value="GO_Central"/>
</dbReference>
<dbReference type="GO" id="GO:0016592">
    <property type="term" value="C:mediator complex"/>
    <property type="evidence" value="ECO:0000314"/>
    <property type="project" value="PomBase"/>
</dbReference>
<dbReference type="GO" id="GO:0003713">
    <property type="term" value="F:transcription coactivator activity"/>
    <property type="evidence" value="ECO:0000314"/>
    <property type="project" value="PomBase"/>
</dbReference>
<dbReference type="GO" id="GO:0060261">
    <property type="term" value="P:positive regulation of transcription initiation by RNA polymerase II"/>
    <property type="evidence" value="ECO:0000269"/>
    <property type="project" value="PomBase"/>
</dbReference>
<dbReference type="GO" id="GO:0006357">
    <property type="term" value="P:regulation of transcription by RNA polymerase II"/>
    <property type="evidence" value="ECO:0000318"/>
    <property type="project" value="GO_Central"/>
</dbReference>
<dbReference type="Gene3D" id="3.10.450.580">
    <property type="entry name" value="Mediator complex, subunit Med6"/>
    <property type="match status" value="1"/>
</dbReference>
<dbReference type="InterPro" id="IPR007018">
    <property type="entry name" value="Mediator_Med6"/>
</dbReference>
<dbReference type="InterPro" id="IPR016612">
    <property type="entry name" value="Mediator_Med6_fun"/>
</dbReference>
<dbReference type="InterPro" id="IPR038566">
    <property type="entry name" value="Mediator_Med6_sf"/>
</dbReference>
<dbReference type="PANTHER" id="PTHR13104">
    <property type="entry name" value="MED-6-RELATED"/>
    <property type="match status" value="1"/>
</dbReference>
<dbReference type="Pfam" id="PF04934">
    <property type="entry name" value="Med6"/>
    <property type="match status" value="1"/>
</dbReference>
<dbReference type="PIRSF" id="PIRSF013286">
    <property type="entry name" value="MED6_fungi"/>
    <property type="match status" value="1"/>
</dbReference>
<keyword id="KW-0002">3D-structure</keyword>
<keyword id="KW-0010">Activator</keyword>
<keyword id="KW-0539">Nucleus</keyword>
<keyword id="KW-1185">Reference proteome</keyword>
<keyword id="KW-0804">Transcription</keyword>
<keyword id="KW-0805">Transcription regulation</keyword>
<proteinExistence type="evidence at protein level"/>
<organism>
    <name type="scientific">Schizosaccharomyces pombe (strain 972 / ATCC 24843)</name>
    <name type="common">Fission yeast</name>
    <dbReference type="NCBI Taxonomy" id="284812"/>
    <lineage>
        <taxon>Eukaryota</taxon>
        <taxon>Fungi</taxon>
        <taxon>Dikarya</taxon>
        <taxon>Ascomycota</taxon>
        <taxon>Taphrinomycotina</taxon>
        <taxon>Schizosaccharomycetes</taxon>
        <taxon>Schizosaccharomycetales</taxon>
        <taxon>Schizosaccharomycetaceae</taxon>
        <taxon>Schizosaccharomyces</taxon>
    </lineage>
</organism>
<name>MED6_SCHPO</name>
<protein>
    <recommendedName>
        <fullName>Mediator of RNA polymerase II transcription subunit 6</fullName>
    </recommendedName>
    <alternativeName>
        <fullName>Mediator complex subunit 6</fullName>
    </alternativeName>
    <alternativeName>
        <fullName>RNA polymerase II mediator complex protein pmc5</fullName>
    </alternativeName>
</protein>
<reference key="1">
    <citation type="journal article" date="2002" name="Nature">
        <title>The genome sequence of Schizosaccharomyces pombe.</title>
        <authorList>
            <person name="Wood V."/>
            <person name="Gwilliam R."/>
            <person name="Rajandream M.A."/>
            <person name="Lyne M.H."/>
            <person name="Lyne R."/>
            <person name="Stewart A."/>
            <person name="Sgouros J.G."/>
            <person name="Peat N."/>
            <person name="Hayles J."/>
            <person name="Baker S.G."/>
            <person name="Basham D."/>
            <person name="Bowman S."/>
            <person name="Brooks K."/>
            <person name="Brown D."/>
            <person name="Brown S."/>
            <person name="Chillingworth T."/>
            <person name="Churcher C.M."/>
            <person name="Collins M."/>
            <person name="Connor R."/>
            <person name="Cronin A."/>
            <person name="Davis P."/>
            <person name="Feltwell T."/>
            <person name="Fraser A."/>
            <person name="Gentles S."/>
            <person name="Goble A."/>
            <person name="Hamlin N."/>
            <person name="Harris D.E."/>
            <person name="Hidalgo J."/>
            <person name="Hodgson G."/>
            <person name="Holroyd S."/>
            <person name="Hornsby T."/>
            <person name="Howarth S."/>
            <person name="Huckle E.J."/>
            <person name="Hunt S."/>
            <person name="Jagels K."/>
            <person name="James K.D."/>
            <person name="Jones L."/>
            <person name="Jones M."/>
            <person name="Leather S."/>
            <person name="McDonald S."/>
            <person name="McLean J."/>
            <person name="Mooney P."/>
            <person name="Moule S."/>
            <person name="Mungall K.L."/>
            <person name="Murphy L.D."/>
            <person name="Niblett D."/>
            <person name="Odell C."/>
            <person name="Oliver K."/>
            <person name="O'Neil S."/>
            <person name="Pearson D."/>
            <person name="Quail M.A."/>
            <person name="Rabbinowitsch E."/>
            <person name="Rutherford K.M."/>
            <person name="Rutter S."/>
            <person name="Saunders D."/>
            <person name="Seeger K."/>
            <person name="Sharp S."/>
            <person name="Skelton J."/>
            <person name="Simmonds M.N."/>
            <person name="Squares R."/>
            <person name="Squares S."/>
            <person name="Stevens K."/>
            <person name="Taylor K."/>
            <person name="Taylor R.G."/>
            <person name="Tivey A."/>
            <person name="Walsh S.V."/>
            <person name="Warren T."/>
            <person name="Whitehead S."/>
            <person name="Woodward J.R."/>
            <person name="Volckaert G."/>
            <person name="Aert R."/>
            <person name="Robben J."/>
            <person name="Grymonprez B."/>
            <person name="Weltjens I."/>
            <person name="Vanstreels E."/>
            <person name="Rieger M."/>
            <person name="Schaefer M."/>
            <person name="Mueller-Auer S."/>
            <person name="Gabel C."/>
            <person name="Fuchs M."/>
            <person name="Duesterhoeft A."/>
            <person name="Fritzc C."/>
            <person name="Holzer E."/>
            <person name="Moestl D."/>
            <person name="Hilbert H."/>
            <person name="Borzym K."/>
            <person name="Langer I."/>
            <person name="Beck A."/>
            <person name="Lehrach H."/>
            <person name="Reinhardt R."/>
            <person name="Pohl T.M."/>
            <person name="Eger P."/>
            <person name="Zimmermann W."/>
            <person name="Wedler H."/>
            <person name="Wambutt R."/>
            <person name="Purnelle B."/>
            <person name="Goffeau A."/>
            <person name="Cadieu E."/>
            <person name="Dreano S."/>
            <person name="Gloux S."/>
            <person name="Lelaure V."/>
            <person name="Mottier S."/>
            <person name="Galibert F."/>
            <person name="Aves S.J."/>
            <person name="Xiang Z."/>
            <person name="Hunt C."/>
            <person name="Moore K."/>
            <person name="Hurst S.M."/>
            <person name="Lucas M."/>
            <person name="Rochet M."/>
            <person name="Gaillardin C."/>
            <person name="Tallada V.A."/>
            <person name="Garzon A."/>
            <person name="Thode G."/>
            <person name="Daga R.R."/>
            <person name="Cruzado L."/>
            <person name="Jimenez J."/>
            <person name="Sanchez M."/>
            <person name="del Rey F."/>
            <person name="Benito J."/>
            <person name="Dominguez A."/>
            <person name="Revuelta J.L."/>
            <person name="Moreno S."/>
            <person name="Armstrong J."/>
            <person name="Forsburg S.L."/>
            <person name="Cerutti L."/>
            <person name="Lowe T."/>
            <person name="McCombie W.R."/>
            <person name="Paulsen I."/>
            <person name="Potashkin J."/>
            <person name="Shpakovski G.V."/>
            <person name="Ussery D."/>
            <person name="Barrell B.G."/>
            <person name="Nurse P."/>
        </authorList>
    </citation>
    <scope>NUCLEOTIDE SEQUENCE [LARGE SCALE GENOMIC DNA]</scope>
    <source>
        <strain>972 / ATCC 24843</strain>
    </source>
</reference>
<reference key="2">
    <citation type="journal article" date="2000" name="J. Biol. Chem.">
        <title>Purification and characterization of RNA polymerase II holoenzyme from Schizosaccharomyces pombe.</title>
        <authorList>
            <person name="Spaehr H."/>
            <person name="Beve J."/>
            <person name="Larsson T."/>
            <person name="Bergstroem J."/>
            <person name="Karlsson K.-A."/>
            <person name="Gustafsson C.M."/>
        </authorList>
    </citation>
    <scope>IDENTIFICATION BY MASS SPECTROMETRY</scope>
    <scope>IDENTIFICATION IN THE MEDIATOR COMPLEX</scope>
    <source>
        <strain>972 / ATCC 24843</strain>
    </source>
</reference>
<reference key="3">
    <citation type="journal article" date="2001" name="Proc. Natl. Acad. Sci. U.S.A.">
        <title>Analysis of Schizosaccharomyces pombe mediator reveals a set of essential subunits conserved between yeast and metazoan cells.</title>
        <authorList>
            <person name="Spaehr H."/>
            <person name="Samuelsen C.O."/>
            <person name="Baraznenok V."/>
            <person name="Ernest I."/>
            <person name="Huylebroeck D."/>
            <person name="Remacle J.E."/>
            <person name="Samuelsson T."/>
            <person name="Kieselbach T."/>
            <person name="Holmberg S."/>
            <person name="Gustafsson C.M."/>
        </authorList>
    </citation>
    <scope>IDENTIFICATION BY MASS SPECTROMETRY</scope>
    <scope>IDENTIFICATION IN THE MEDIATOR COMPLEX</scope>
</reference>
<comment type="function">
    <text>Component of the Mediator complex, a coactivator involved in the regulated transcription of nearly all RNA polymerase II-dependent genes. Mediator functions as a bridge to convey information from gene-specific regulatory proteins to the basal RNA polymerase II transcription machinery. Mediator is recruited to promoters by direct interactions with regulatory proteins and serves as a scaffold for the assembly of a functional preinitiation complex with RNA polymerase II and the general transcription factors.</text>
</comment>
<comment type="subunit">
    <text evidence="3 4">Component of the Mediator complex.</text>
</comment>
<comment type="subcellular location">
    <subcellularLocation>
        <location evidence="1">Nucleus</location>
    </subcellularLocation>
</comment>
<comment type="similarity">
    <text evidence="5">Belongs to the Mediator complex subunit 6 family.</text>
</comment>
<gene>
    <name type="primary">med6</name>
    <name type="synonym">pmc5</name>
    <name type="ORF">SPAC1002.15c</name>
</gene>
<sequence>MASGAPPSVDLTSIQWRMPEWVQSMGGLRTENVLEYFSQSPFYSHKSNNEMLKMQSQFNALDLGDLNSQLKRLTGIQFVIIHERPPFLWVIQKQNRLNENEVKPLTVYFVCNENIYMAPNAYTLLATRMLNATYCFQKALTKIEKFPQYNPQEGYTYPKLSNDNLEVDHSNTNEPADENKNQSIENADYSFSPEDFSVVRAFMQSLHSSKEAPDVK</sequence>
<feature type="chain" id="PRO_0000096390" description="Mediator of RNA polymerase II transcription subunit 6">
    <location>
        <begin position="1"/>
        <end position="216"/>
    </location>
</feature>
<feature type="region of interest" description="Disordered" evidence="2">
    <location>
        <begin position="157"/>
        <end position="187"/>
    </location>
</feature>
<feature type="helix" evidence="6">
    <location>
        <begin position="11"/>
        <end position="13"/>
    </location>
</feature>
<feature type="helix" evidence="6">
    <location>
        <begin position="19"/>
        <end position="24"/>
    </location>
</feature>
<feature type="turn" evidence="6">
    <location>
        <begin position="30"/>
        <end position="32"/>
    </location>
</feature>
<feature type="helix" evidence="6">
    <location>
        <begin position="33"/>
        <end position="38"/>
    </location>
</feature>
<feature type="strand" evidence="8">
    <location>
        <begin position="40"/>
        <end position="43"/>
    </location>
</feature>
<feature type="helix" evidence="6">
    <location>
        <begin position="48"/>
        <end position="58"/>
    </location>
</feature>
<feature type="helix" evidence="6">
    <location>
        <begin position="66"/>
        <end position="71"/>
    </location>
</feature>
<feature type="strand" evidence="6">
    <location>
        <begin position="75"/>
        <end position="84"/>
    </location>
</feature>
<feature type="turn" evidence="6">
    <location>
        <begin position="85"/>
        <end position="87"/>
    </location>
</feature>
<feature type="strand" evidence="6">
    <location>
        <begin position="88"/>
        <end position="96"/>
    </location>
</feature>
<feature type="strand" evidence="6">
    <location>
        <begin position="98"/>
        <end position="100"/>
    </location>
</feature>
<feature type="strand" evidence="6">
    <location>
        <begin position="102"/>
        <end position="111"/>
    </location>
</feature>
<feature type="strand" evidence="6">
    <location>
        <begin position="114"/>
        <end position="117"/>
    </location>
</feature>
<feature type="helix" evidence="6">
    <location>
        <begin position="120"/>
        <end position="140"/>
    </location>
</feature>
<feature type="strand" evidence="7">
    <location>
        <begin position="148"/>
        <end position="150"/>
    </location>
</feature>
<feature type="turn" evidence="7">
    <location>
        <begin position="151"/>
        <end position="153"/>
    </location>
</feature>
<feature type="strand" evidence="7">
    <location>
        <begin position="154"/>
        <end position="156"/>
    </location>
</feature>
<feature type="helix" evidence="8">
    <location>
        <begin position="193"/>
        <end position="211"/>
    </location>
</feature>